<proteinExistence type="inferred from homology"/>
<sequence>MKQYLELMQKVLDEGTQKNDRTGTGTLSIFGHQMRFNLQDGFPLVTTKRCHLRSIIHELLWFLQGDTNIAYLHENNVTIWDEWADENGDLGPVYGKQWRAWPTPDGRHIDQITTVLNQLKNDPDSRRIIVSAWNVGELDKMALAPCHAFFQFYVADGKLSCQLYQRSCDVFLGLPFNIASYALLVHMMAQQCDLEVGDFVWTGGDTHLYSNHMDQTHLQLSREPRPLPKLIIKRKPESIFDYRFEDFEIEGYDPHPGIKAPVAI</sequence>
<protein>
    <recommendedName>
        <fullName evidence="2">Thymidylate synthase</fullName>
        <shortName evidence="2">TS</shortName>
        <shortName evidence="2">TSase</shortName>
        <ecNumber evidence="2">2.1.1.45</ecNumber>
    </recommendedName>
</protein>
<accession>P0A885</accession>
<accession>P00470</accession>
<organism>
    <name type="scientific">Escherichia coli O6:H1 (strain CFT073 / ATCC 700928 / UPEC)</name>
    <dbReference type="NCBI Taxonomy" id="199310"/>
    <lineage>
        <taxon>Bacteria</taxon>
        <taxon>Pseudomonadati</taxon>
        <taxon>Pseudomonadota</taxon>
        <taxon>Gammaproteobacteria</taxon>
        <taxon>Enterobacterales</taxon>
        <taxon>Enterobacteriaceae</taxon>
        <taxon>Escherichia</taxon>
    </lineage>
</organism>
<feature type="chain" id="PRO_0000140956" description="Thymidylate synthase">
    <location>
        <begin position="1"/>
        <end position="264"/>
    </location>
</feature>
<feature type="active site" description="Nucleophile" evidence="2">
    <location>
        <position position="146"/>
    </location>
</feature>
<feature type="binding site" description="in other chain" evidence="2">
    <location>
        <position position="21"/>
    </location>
    <ligand>
        <name>dUMP</name>
        <dbReference type="ChEBI" id="CHEBI:246422"/>
        <note>ligand shared between dimeric partners</note>
    </ligand>
</feature>
<feature type="binding site" evidence="2">
    <location>
        <position position="51"/>
    </location>
    <ligand>
        <name>(6R)-5,10-methylene-5,6,7,8-tetrahydrofolate</name>
        <dbReference type="ChEBI" id="CHEBI:15636"/>
    </ligand>
</feature>
<feature type="binding site" evidence="2">
    <location>
        <begin position="126"/>
        <end position="127"/>
    </location>
    <ligand>
        <name>dUMP</name>
        <dbReference type="ChEBI" id="CHEBI:246422"/>
        <note>ligand shared between dimeric partners</note>
    </ligand>
</feature>
<feature type="binding site" description="in other chain" evidence="2">
    <location>
        <begin position="166"/>
        <end position="169"/>
    </location>
    <ligand>
        <name>dUMP</name>
        <dbReference type="ChEBI" id="CHEBI:246422"/>
        <note>ligand shared between dimeric partners</note>
    </ligand>
</feature>
<feature type="binding site" evidence="2">
    <location>
        <position position="169"/>
    </location>
    <ligand>
        <name>(6R)-5,10-methylene-5,6,7,8-tetrahydrofolate</name>
        <dbReference type="ChEBI" id="CHEBI:15636"/>
    </ligand>
</feature>
<feature type="binding site" description="in other chain" evidence="2">
    <location>
        <position position="177"/>
    </location>
    <ligand>
        <name>dUMP</name>
        <dbReference type="ChEBI" id="CHEBI:246422"/>
        <note>ligand shared between dimeric partners</note>
    </ligand>
</feature>
<feature type="binding site" description="in other chain" evidence="2">
    <location>
        <begin position="207"/>
        <end position="209"/>
    </location>
    <ligand>
        <name>dUMP</name>
        <dbReference type="ChEBI" id="CHEBI:246422"/>
        <note>ligand shared between dimeric partners</note>
    </ligand>
</feature>
<feature type="binding site" evidence="2">
    <location>
        <position position="263"/>
    </location>
    <ligand>
        <name>(6R)-5,10-methylene-5,6,7,8-tetrahydrofolate</name>
        <dbReference type="ChEBI" id="CHEBI:15636"/>
    </ligand>
</feature>
<evidence type="ECO:0000250" key="1"/>
<evidence type="ECO:0000255" key="2">
    <source>
        <dbReference type="HAMAP-Rule" id="MF_00008"/>
    </source>
</evidence>
<dbReference type="EC" id="2.1.1.45" evidence="2"/>
<dbReference type="EMBL" id="AE014075">
    <property type="protein sequence ID" value="AAN81867.1"/>
    <property type="molecule type" value="Genomic_DNA"/>
</dbReference>
<dbReference type="RefSeq" id="WP_000816232.1">
    <property type="nucleotide sequence ID" value="NZ_CP051263.1"/>
</dbReference>
<dbReference type="SMR" id="P0A885"/>
<dbReference type="STRING" id="199310.c3422"/>
<dbReference type="GeneID" id="93779171"/>
<dbReference type="KEGG" id="ecc:c3422"/>
<dbReference type="eggNOG" id="COG0207">
    <property type="taxonomic scope" value="Bacteria"/>
</dbReference>
<dbReference type="HOGENOM" id="CLU_021669_0_0_6"/>
<dbReference type="BioCyc" id="ECOL199310:C3422-MONOMER"/>
<dbReference type="SABIO-RK" id="P0A885"/>
<dbReference type="UniPathway" id="UPA00575"/>
<dbReference type="Proteomes" id="UP000001410">
    <property type="component" value="Chromosome"/>
</dbReference>
<dbReference type="GO" id="GO:0005829">
    <property type="term" value="C:cytosol"/>
    <property type="evidence" value="ECO:0007669"/>
    <property type="project" value="TreeGrafter"/>
</dbReference>
<dbReference type="GO" id="GO:0004799">
    <property type="term" value="F:thymidylate synthase activity"/>
    <property type="evidence" value="ECO:0007669"/>
    <property type="project" value="UniProtKB-UniRule"/>
</dbReference>
<dbReference type="GO" id="GO:0006231">
    <property type="term" value="P:dTMP biosynthetic process"/>
    <property type="evidence" value="ECO:0007669"/>
    <property type="project" value="UniProtKB-UniRule"/>
</dbReference>
<dbReference type="GO" id="GO:0006235">
    <property type="term" value="P:dTTP biosynthetic process"/>
    <property type="evidence" value="ECO:0007669"/>
    <property type="project" value="UniProtKB-UniRule"/>
</dbReference>
<dbReference type="GO" id="GO:0032259">
    <property type="term" value="P:methylation"/>
    <property type="evidence" value="ECO:0007669"/>
    <property type="project" value="UniProtKB-KW"/>
</dbReference>
<dbReference type="CDD" id="cd00351">
    <property type="entry name" value="TS_Pyrimidine_HMase"/>
    <property type="match status" value="1"/>
</dbReference>
<dbReference type="FunFam" id="3.30.572.10:FF:000001">
    <property type="entry name" value="Thymidylate synthase"/>
    <property type="match status" value="1"/>
</dbReference>
<dbReference type="Gene3D" id="3.30.572.10">
    <property type="entry name" value="Thymidylate synthase/dCMP hydroxymethylase domain"/>
    <property type="match status" value="1"/>
</dbReference>
<dbReference type="HAMAP" id="MF_00008">
    <property type="entry name" value="Thymidy_synth_bact"/>
    <property type="match status" value="1"/>
</dbReference>
<dbReference type="InterPro" id="IPR045097">
    <property type="entry name" value="Thymidate_synth/dCMP_Mease"/>
</dbReference>
<dbReference type="InterPro" id="IPR023451">
    <property type="entry name" value="Thymidate_synth/dCMP_Mease_dom"/>
</dbReference>
<dbReference type="InterPro" id="IPR036926">
    <property type="entry name" value="Thymidate_synth/dCMP_Mease_sf"/>
</dbReference>
<dbReference type="InterPro" id="IPR000398">
    <property type="entry name" value="Thymidylate_synthase"/>
</dbReference>
<dbReference type="InterPro" id="IPR020940">
    <property type="entry name" value="Thymidylate_synthase_AS"/>
</dbReference>
<dbReference type="NCBIfam" id="NF002497">
    <property type="entry name" value="PRK01827.1-3"/>
    <property type="match status" value="1"/>
</dbReference>
<dbReference type="NCBIfam" id="NF002499">
    <property type="entry name" value="PRK01827.1-5"/>
    <property type="match status" value="1"/>
</dbReference>
<dbReference type="NCBIfam" id="TIGR03284">
    <property type="entry name" value="thym_sym"/>
    <property type="match status" value="2"/>
</dbReference>
<dbReference type="PANTHER" id="PTHR11548:SF9">
    <property type="entry name" value="THYMIDYLATE SYNTHASE"/>
    <property type="match status" value="1"/>
</dbReference>
<dbReference type="PANTHER" id="PTHR11548">
    <property type="entry name" value="THYMIDYLATE SYNTHASE 1"/>
    <property type="match status" value="1"/>
</dbReference>
<dbReference type="Pfam" id="PF00303">
    <property type="entry name" value="Thymidylat_synt"/>
    <property type="match status" value="1"/>
</dbReference>
<dbReference type="PRINTS" id="PR00108">
    <property type="entry name" value="THYMDSNTHASE"/>
</dbReference>
<dbReference type="SUPFAM" id="SSF55831">
    <property type="entry name" value="Thymidylate synthase/dCMP hydroxymethylase"/>
    <property type="match status" value="1"/>
</dbReference>
<dbReference type="PROSITE" id="PS00091">
    <property type="entry name" value="THYMIDYLATE_SYNTHASE"/>
    <property type="match status" value="1"/>
</dbReference>
<gene>
    <name evidence="2" type="primary">thyA</name>
    <name type="ordered locus">c3422</name>
</gene>
<name>TYSY_ECOL6</name>
<comment type="function">
    <text evidence="2">Catalyzes the reductive methylation of 2'-deoxyuridine-5'-monophosphate (dUMP) to 2'-deoxythymidine-5'-monophosphate (dTMP) while utilizing 5,10-methylenetetrahydrofolate (mTHF) as the methyl donor and reductant in the reaction, yielding dihydrofolate (DHF) as a by-product. This enzymatic reaction provides an intracellular de novo source of dTMP, an essential precursor for DNA biosynthesis.</text>
</comment>
<comment type="catalytic activity">
    <reaction evidence="2">
        <text>dUMP + (6R)-5,10-methylene-5,6,7,8-tetrahydrofolate = 7,8-dihydrofolate + dTMP</text>
        <dbReference type="Rhea" id="RHEA:12104"/>
        <dbReference type="ChEBI" id="CHEBI:15636"/>
        <dbReference type="ChEBI" id="CHEBI:57451"/>
        <dbReference type="ChEBI" id="CHEBI:63528"/>
        <dbReference type="ChEBI" id="CHEBI:246422"/>
        <dbReference type="EC" id="2.1.1.45"/>
    </reaction>
</comment>
<comment type="pathway">
    <text evidence="2">Pyrimidine metabolism; dTTP biosynthesis.</text>
</comment>
<comment type="subunit">
    <text evidence="2">Homodimer.</text>
</comment>
<comment type="subcellular location">
    <subcellularLocation>
        <location evidence="2">Cytoplasm</location>
    </subcellularLocation>
</comment>
<comment type="PTM">
    <text evidence="1">The N-terminal is probably N-(dihydroxymethyl)-methionine, the hydrated form of N-formylmethionine.</text>
</comment>
<comment type="similarity">
    <text evidence="2">Belongs to the thymidylate synthase family. Bacterial-type ThyA subfamily.</text>
</comment>
<keyword id="KW-0963">Cytoplasm</keyword>
<keyword id="KW-0291">Formylation</keyword>
<keyword id="KW-0489">Methyltransferase</keyword>
<keyword id="KW-0545">Nucleotide biosynthesis</keyword>
<keyword id="KW-1185">Reference proteome</keyword>
<keyword id="KW-0808">Transferase</keyword>
<reference key="1">
    <citation type="journal article" date="2002" name="Proc. Natl. Acad. Sci. U.S.A.">
        <title>Extensive mosaic structure revealed by the complete genome sequence of uropathogenic Escherichia coli.</title>
        <authorList>
            <person name="Welch R.A."/>
            <person name="Burland V."/>
            <person name="Plunkett G. III"/>
            <person name="Redford P."/>
            <person name="Roesch P."/>
            <person name="Rasko D."/>
            <person name="Buckles E.L."/>
            <person name="Liou S.-R."/>
            <person name="Boutin A."/>
            <person name="Hackett J."/>
            <person name="Stroud D."/>
            <person name="Mayhew G.F."/>
            <person name="Rose D.J."/>
            <person name="Zhou S."/>
            <person name="Schwartz D.C."/>
            <person name="Perna N.T."/>
            <person name="Mobley H.L.T."/>
            <person name="Donnenberg M.S."/>
            <person name="Blattner F.R."/>
        </authorList>
    </citation>
    <scope>NUCLEOTIDE SEQUENCE [LARGE SCALE GENOMIC DNA]</scope>
    <source>
        <strain>CFT073 / ATCC 700928 / UPEC</strain>
    </source>
</reference>